<proteinExistence type="inferred from homology"/>
<comment type="function">
    <text evidence="1">One of the primary rRNA binding proteins, it binds directly near the 3'-end of the 23S rRNA, where it nucleates assembly of the 50S subunit.</text>
</comment>
<comment type="subunit">
    <text evidence="1">Part of the 50S ribosomal subunit. Forms a cluster with proteins L14 and L19.</text>
</comment>
<comment type="PTM">
    <text evidence="1">Methylated by PrmB.</text>
</comment>
<comment type="similarity">
    <text evidence="1">Belongs to the universal ribosomal protein uL3 family.</text>
</comment>
<gene>
    <name evidence="1" type="primary">rplC</name>
    <name type="ordered locus">Csal_0421</name>
</gene>
<organism>
    <name type="scientific">Chromohalobacter salexigens (strain ATCC BAA-138 / DSM 3043 / CIP 106854 / NCIMB 13768 / 1H11)</name>
    <dbReference type="NCBI Taxonomy" id="290398"/>
    <lineage>
        <taxon>Bacteria</taxon>
        <taxon>Pseudomonadati</taxon>
        <taxon>Pseudomonadota</taxon>
        <taxon>Gammaproteobacteria</taxon>
        <taxon>Oceanospirillales</taxon>
        <taxon>Halomonadaceae</taxon>
        <taxon>Chromohalobacter</taxon>
    </lineage>
</organism>
<name>RL3_CHRSD</name>
<sequence length="212" mass="22423">MTIGLVGKKSGMTRIFTENGASVPVTVIEVEPNRVTRVKTVESDGYSAVQVTSGSRKAKHLTKAAAGQYAKSGVEAGRSLMEFRLAEGEEAPEVGGNITVSLFEAGQKVDVTGTSKGKGFQGAVKRWNFRTQDNGHGNSLAHRAPGSIGQCQTPGRVFKGKKMAGQLGNERVTVQSLEIVRVDAERNLLLVKGAVPGATDCEVIVRSAVKAR</sequence>
<dbReference type="EMBL" id="CP000285">
    <property type="protein sequence ID" value="ABE57783.1"/>
    <property type="molecule type" value="Genomic_DNA"/>
</dbReference>
<dbReference type="RefSeq" id="WP_011505729.1">
    <property type="nucleotide sequence ID" value="NC_007963.1"/>
</dbReference>
<dbReference type="SMR" id="Q1R0H5"/>
<dbReference type="STRING" id="290398.Csal_0421"/>
<dbReference type="GeneID" id="95333174"/>
<dbReference type="KEGG" id="csa:Csal_0421"/>
<dbReference type="eggNOG" id="COG0087">
    <property type="taxonomic scope" value="Bacteria"/>
</dbReference>
<dbReference type="HOGENOM" id="CLU_044142_4_1_6"/>
<dbReference type="OrthoDB" id="9806135at2"/>
<dbReference type="Proteomes" id="UP000000239">
    <property type="component" value="Chromosome"/>
</dbReference>
<dbReference type="GO" id="GO:0022625">
    <property type="term" value="C:cytosolic large ribosomal subunit"/>
    <property type="evidence" value="ECO:0007669"/>
    <property type="project" value="TreeGrafter"/>
</dbReference>
<dbReference type="GO" id="GO:0019843">
    <property type="term" value="F:rRNA binding"/>
    <property type="evidence" value="ECO:0007669"/>
    <property type="project" value="UniProtKB-UniRule"/>
</dbReference>
<dbReference type="GO" id="GO:0003735">
    <property type="term" value="F:structural constituent of ribosome"/>
    <property type="evidence" value="ECO:0007669"/>
    <property type="project" value="InterPro"/>
</dbReference>
<dbReference type="GO" id="GO:0006412">
    <property type="term" value="P:translation"/>
    <property type="evidence" value="ECO:0007669"/>
    <property type="project" value="UniProtKB-UniRule"/>
</dbReference>
<dbReference type="FunFam" id="2.40.30.10:FF:000004">
    <property type="entry name" value="50S ribosomal protein L3"/>
    <property type="match status" value="1"/>
</dbReference>
<dbReference type="FunFam" id="3.30.160.810:FF:000001">
    <property type="entry name" value="50S ribosomal protein L3"/>
    <property type="match status" value="1"/>
</dbReference>
<dbReference type="Gene3D" id="3.30.160.810">
    <property type="match status" value="1"/>
</dbReference>
<dbReference type="Gene3D" id="2.40.30.10">
    <property type="entry name" value="Translation factors"/>
    <property type="match status" value="1"/>
</dbReference>
<dbReference type="HAMAP" id="MF_01325_B">
    <property type="entry name" value="Ribosomal_uL3_B"/>
    <property type="match status" value="1"/>
</dbReference>
<dbReference type="InterPro" id="IPR000597">
    <property type="entry name" value="Ribosomal_uL3"/>
</dbReference>
<dbReference type="InterPro" id="IPR019927">
    <property type="entry name" value="Ribosomal_uL3_bac/org-type"/>
</dbReference>
<dbReference type="InterPro" id="IPR019926">
    <property type="entry name" value="Ribosomal_uL3_CS"/>
</dbReference>
<dbReference type="InterPro" id="IPR009000">
    <property type="entry name" value="Transl_B-barrel_sf"/>
</dbReference>
<dbReference type="NCBIfam" id="TIGR03625">
    <property type="entry name" value="L3_bact"/>
    <property type="match status" value="1"/>
</dbReference>
<dbReference type="PANTHER" id="PTHR11229">
    <property type="entry name" value="50S RIBOSOMAL PROTEIN L3"/>
    <property type="match status" value="1"/>
</dbReference>
<dbReference type="PANTHER" id="PTHR11229:SF16">
    <property type="entry name" value="LARGE RIBOSOMAL SUBUNIT PROTEIN UL3C"/>
    <property type="match status" value="1"/>
</dbReference>
<dbReference type="Pfam" id="PF00297">
    <property type="entry name" value="Ribosomal_L3"/>
    <property type="match status" value="1"/>
</dbReference>
<dbReference type="SUPFAM" id="SSF50447">
    <property type="entry name" value="Translation proteins"/>
    <property type="match status" value="1"/>
</dbReference>
<dbReference type="PROSITE" id="PS00474">
    <property type="entry name" value="RIBOSOMAL_L3"/>
    <property type="match status" value="1"/>
</dbReference>
<accession>Q1R0H5</accession>
<feature type="chain" id="PRO_1000052030" description="Large ribosomal subunit protein uL3">
    <location>
        <begin position="1"/>
        <end position="212"/>
    </location>
</feature>
<feature type="modified residue" description="N5-methylglutamine" evidence="1">
    <location>
        <position position="152"/>
    </location>
</feature>
<keyword id="KW-0488">Methylation</keyword>
<keyword id="KW-1185">Reference proteome</keyword>
<keyword id="KW-0687">Ribonucleoprotein</keyword>
<keyword id="KW-0689">Ribosomal protein</keyword>
<keyword id="KW-0694">RNA-binding</keyword>
<keyword id="KW-0699">rRNA-binding</keyword>
<protein>
    <recommendedName>
        <fullName evidence="1">Large ribosomal subunit protein uL3</fullName>
    </recommendedName>
    <alternativeName>
        <fullName evidence="2">50S ribosomal protein L3</fullName>
    </alternativeName>
</protein>
<reference key="1">
    <citation type="journal article" date="2011" name="Stand. Genomic Sci.">
        <title>Complete genome sequence of the halophilic and highly halotolerant Chromohalobacter salexigens type strain (1H11(T)).</title>
        <authorList>
            <person name="Copeland A."/>
            <person name="O'Connor K."/>
            <person name="Lucas S."/>
            <person name="Lapidus A."/>
            <person name="Berry K.W."/>
            <person name="Detter J.C."/>
            <person name="Del Rio T.G."/>
            <person name="Hammon N."/>
            <person name="Dalin E."/>
            <person name="Tice H."/>
            <person name="Pitluck S."/>
            <person name="Bruce D."/>
            <person name="Goodwin L."/>
            <person name="Han C."/>
            <person name="Tapia R."/>
            <person name="Saunders E."/>
            <person name="Schmutz J."/>
            <person name="Brettin T."/>
            <person name="Larimer F."/>
            <person name="Land M."/>
            <person name="Hauser L."/>
            <person name="Vargas C."/>
            <person name="Nieto J.J."/>
            <person name="Kyrpides N.C."/>
            <person name="Ivanova N."/>
            <person name="Goker M."/>
            <person name="Klenk H.P."/>
            <person name="Csonka L.N."/>
            <person name="Woyke T."/>
        </authorList>
    </citation>
    <scope>NUCLEOTIDE SEQUENCE [LARGE SCALE GENOMIC DNA]</scope>
    <source>
        <strain>ATCC BAA-138 / DSM 3043 / CIP 106854 / NCIMB 13768 / 1H11</strain>
    </source>
</reference>
<evidence type="ECO:0000255" key="1">
    <source>
        <dbReference type="HAMAP-Rule" id="MF_01325"/>
    </source>
</evidence>
<evidence type="ECO:0000305" key="2"/>